<dbReference type="EC" id="4.1.1.-"/>
<dbReference type="EMBL" id="AK296110">
    <property type="protein sequence ID" value="BAG58859.1"/>
    <property type="molecule type" value="mRNA"/>
</dbReference>
<dbReference type="EMBL" id="DC339950">
    <property type="status" value="NOT_ANNOTATED_CDS"/>
    <property type="molecule type" value="mRNA"/>
</dbReference>
<dbReference type="EMBL" id="AP000350">
    <property type="status" value="NOT_ANNOTATED_CDS"/>
    <property type="molecule type" value="Genomic_DNA"/>
</dbReference>
<dbReference type="CCDS" id="CCDS42988.1"/>
<dbReference type="RefSeq" id="NP_001077862.1">
    <property type="nucleotide sequence ID" value="NM_001084393.2"/>
</dbReference>
<dbReference type="SMR" id="A6NHG4"/>
<dbReference type="BioGRID" id="755774">
    <property type="interactions" value="17"/>
</dbReference>
<dbReference type="FunCoup" id="A6NHG4">
    <property type="interactions" value="48"/>
</dbReference>
<dbReference type="IntAct" id="A6NHG4">
    <property type="interactions" value="1"/>
</dbReference>
<dbReference type="MINT" id="A6NHG4"/>
<dbReference type="STRING" id="9606.ENSP00000215770"/>
<dbReference type="GlyGen" id="A6NHG4">
    <property type="glycosylation" value="3 sites, 1 N-linked glycan (1 site), 1 O-linked glycan (1 site)"/>
</dbReference>
<dbReference type="iPTMnet" id="A6NHG4"/>
<dbReference type="PhosphoSitePlus" id="A6NHG4"/>
<dbReference type="BioMuta" id="DDTL"/>
<dbReference type="jPOST" id="A6NHG4"/>
<dbReference type="MassIVE" id="A6NHG4"/>
<dbReference type="PaxDb" id="9606-ENSP00000215770"/>
<dbReference type="PeptideAtlas" id="A6NHG4"/>
<dbReference type="ProteomicsDB" id="1195"/>
<dbReference type="Pumba" id="A6NHG4"/>
<dbReference type="Antibodypedia" id="82126">
    <property type="antibodies" value="1 antibodies from 1 providers"/>
</dbReference>
<dbReference type="DNASU" id="100037417"/>
<dbReference type="Ensembl" id="ENST00000215770.6">
    <property type="protein sequence ID" value="ENSP00000215770.5"/>
    <property type="gene ID" value="ENSG00000099974.8"/>
</dbReference>
<dbReference type="Ensembl" id="ENST00000621454.2">
    <property type="protein sequence ID" value="ENSP00000479063.1"/>
    <property type="gene ID" value="ENSG00000275758.2"/>
</dbReference>
<dbReference type="GeneID" id="100037417"/>
<dbReference type="KEGG" id="hsa:100037417"/>
<dbReference type="MANE-Select" id="ENST00000215770.6">
    <property type="protein sequence ID" value="ENSP00000215770.5"/>
    <property type="RefSeq nucleotide sequence ID" value="NM_001084393.2"/>
    <property type="RefSeq protein sequence ID" value="NP_001077862.1"/>
</dbReference>
<dbReference type="UCSC" id="uc002zyy.5">
    <property type="organism name" value="human"/>
</dbReference>
<dbReference type="AGR" id="HGNC:33446"/>
<dbReference type="CTD" id="100037417"/>
<dbReference type="DisGeNET" id="100037417"/>
<dbReference type="GeneCards" id="DDTL"/>
<dbReference type="HGNC" id="HGNC:33446">
    <property type="gene designation" value="DDTL"/>
</dbReference>
<dbReference type="HPA" id="ENSG00000099974">
    <property type="expression patterns" value="Tissue enhanced (liver)"/>
</dbReference>
<dbReference type="neXtProt" id="NX_A6NHG4"/>
<dbReference type="OpenTargets" id="ENSG00000099974"/>
<dbReference type="PharmGKB" id="PA162383433"/>
<dbReference type="VEuPathDB" id="HostDB:ENSG00000099974"/>
<dbReference type="eggNOG" id="KOG1759">
    <property type="taxonomic scope" value="Eukaryota"/>
</dbReference>
<dbReference type="GeneTree" id="ENSGT00940000156821"/>
<dbReference type="HOGENOM" id="CLU_129906_2_1_1"/>
<dbReference type="InParanoid" id="A6NHG4"/>
<dbReference type="OMA" id="MARCISE"/>
<dbReference type="OrthoDB" id="6080988at2759"/>
<dbReference type="PAN-GO" id="A6NHG4">
    <property type="GO annotations" value="2 GO annotations based on evolutionary models"/>
</dbReference>
<dbReference type="PhylomeDB" id="A6NHG4"/>
<dbReference type="TreeFam" id="TF313853"/>
<dbReference type="PathwayCommons" id="A6NHG4"/>
<dbReference type="SignaLink" id="A6NHG4"/>
<dbReference type="BioGRID-ORCS" id="100037417">
    <property type="hits" value="77 hits in 1076 CRISPR screens"/>
</dbReference>
<dbReference type="ChiTaRS" id="DDTL">
    <property type="organism name" value="human"/>
</dbReference>
<dbReference type="GenomeRNAi" id="100037417"/>
<dbReference type="Pharos" id="A6NHG4">
    <property type="development level" value="Tdark"/>
</dbReference>
<dbReference type="PRO" id="PR:A6NHG4"/>
<dbReference type="Proteomes" id="UP000005640">
    <property type="component" value="Chromosome 22"/>
</dbReference>
<dbReference type="RNAct" id="A6NHG4">
    <property type="molecule type" value="protein"/>
</dbReference>
<dbReference type="Bgee" id="ENSG00000099974">
    <property type="expression patterns" value="Expressed in right lobe of liver and 98 other cell types or tissues"/>
</dbReference>
<dbReference type="ExpressionAtlas" id="A6NHG4">
    <property type="expression patterns" value="baseline and differential"/>
</dbReference>
<dbReference type="GO" id="GO:0005737">
    <property type="term" value="C:cytoplasm"/>
    <property type="evidence" value="ECO:0007669"/>
    <property type="project" value="UniProtKB-SubCell"/>
</dbReference>
<dbReference type="GO" id="GO:0070062">
    <property type="term" value="C:extracellular exosome"/>
    <property type="evidence" value="ECO:0007005"/>
    <property type="project" value="UniProtKB"/>
</dbReference>
<dbReference type="GO" id="GO:0005615">
    <property type="term" value="C:extracellular space"/>
    <property type="evidence" value="ECO:0000318"/>
    <property type="project" value="GO_Central"/>
</dbReference>
<dbReference type="GO" id="GO:0016829">
    <property type="term" value="F:lyase activity"/>
    <property type="evidence" value="ECO:0007669"/>
    <property type="project" value="UniProtKB-KW"/>
</dbReference>
<dbReference type="GO" id="GO:0050178">
    <property type="term" value="F:phenylpyruvate tautomerase activity"/>
    <property type="evidence" value="ECO:0000318"/>
    <property type="project" value="GO_Central"/>
</dbReference>
<dbReference type="Gene3D" id="3.30.429.10">
    <property type="entry name" value="Macrophage Migration Inhibitory Factor"/>
    <property type="match status" value="1"/>
</dbReference>
<dbReference type="InterPro" id="IPR001398">
    <property type="entry name" value="Macrophage_inhib_fac"/>
</dbReference>
<dbReference type="InterPro" id="IPR019829">
    <property type="entry name" value="Macrophage_inhib_fac_CS"/>
</dbReference>
<dbReference type="InterPro" id="IPR014347">
    <property type="entry name" value="Tautomerase/MIF_sf"/>
</dbReference>
<dbReference type="PANTHER" id="PTHR11954">
    <property type="entry name" value="D-DOPACHROME DECARBOXYLASE"/>
    <property type="match status" value="1"/>
</dbReference>
<dbReference type="PANTHER" id="PTHR11954:SF39">
    <property type="entry name" value="D-DOPACHROME DECARBOXYLASE-LIKE PROTEIN"/>
    <property type="match status" value="1"/>
</dbReference>
<dbReference type="Pfam" id="PF01187">
    <property type="entry name" value="MIF"/>
    <property type="match status" value="1"/>
</dbReference>
<dbReference type="SUPFAM" id="SSF55331">
    <property type="entry name" value="Tautomerase/MIF"/>
    <property type="match status" value="1"/>
</dbReference>
<dbReference type="PROSITE" id="PS01158">
    <property type="entry name" value="MIF"/>
    <property type="match status" value="1"/>
</dbReference>
<gene>
    <name type="primary">DDTL</name>
</gene>
<sequence length="134" mass="14195">MPFLELDTNLPANRVPAGLEKRLCAAAASILGKPADRVNVTVRPGLAMALSGSTEPCAQLSISSIGVVGTAEDNRSHSAHFFEFLTKELALGQDRFPTVLSTSPAAHGGPRCPGEIIEGKKSCLNEEALFIYFI</sequence>
<feature type="chain" id="PRO_0000337242" description="D-dopachrome decarboxylase-like protein">
    <location>
        <begin position="1"/>
        <end position="134"/>
    </location>
</feature>
<evidence type="ECO:0000250" key="1"/>
<evidence type="ECO:0000305" key="2"/>
<proteinExistence type="evidence at transcript level"/>
<organism>
    <name type="scientific">Homo sapiens</name>
    <name type="common">Human</name>
    <dbReference type="NCBI Taxonomy" id="9606"/>
    <lineage>
        <taxon>Eukaryota</taxon>
        <taxon>Metazoa</taxon>
        <taxon>Chordata</taxon>
        <taxon>Craniata</taxon>
        <taxon>Vertebrata</taxon>
        <taxon>Euteleostomi</taxon>
        <taxon>Mammalia</taxon>
        <taxon>Eutheria</taxon>
        <taxon>Euarchontoglires</taxon>
        <taxon>Primates</taxon>
        <taxon>Haplorrhini</taxon>
        <taxon>Catarrhini</taxon>
        <taxon>Hominidae</taxon>
        <taxon>Homo</taxon>
    </lineage>
</organism>
<comment type="function">
    <text evidence="2">May have lyase activity.</text>
</comment>
<comment type="subcellular location">
    <subcellularLocation>
        <location evidence="1">Cytoplasm</location>
    </subcellularLocation>
</comment>
<comment type="similarity">
    <text evidence="2">Belongs to the MIF family.</text>
</comment>
<keyword id="KW-0963">Cytoplasm</keyword>
<keyword id="KW-0456">Lyase</keyword>
<keyword id="KW-1185">Reference proteome</keyword>
<protein>
    <recommendedName>
        <fullName>D-dopachrome decarboxylase-like protein</fullName>
        <ecNumber>4.1.1.-</ecNumber>
    </recommendedName>
    <alternativeName>
        <fullName>D-dopachrome tautomerase-like protein</fullName>
    </alternativeName>
</protein>
<accession>A6NHG4</accession>
<accession>B4DJJ7</accession>
<name>DDTL_HUMAN</name>
<reference key="1">
    <citation type="journal article" date="2004" name="Nat. Genet.">
        <title>Complete sequencing and characterization of 21,243 full-length human cDNAs.</title>
        <authorList>
            <person name="Ota T."/>
            <person name="Suzuki Y."/>
            <person name="Nishikawa T."/>
            <person name="Otsuki T."/>
            <person name="Sugiyama T."/>
            <person name="Irie R."/>
            <person name="Wakamatsu A."/>
            <person name="Hayashi K."/>
            <person name="Sato H."/>
            <person name="Nagai K."/>
            <person name="Kimura K."/>
            <person name="Makita H."/>
            <person name="Sekine M."/>
            <person name="Obayashi M."/>
            <person name="Nishi T."/>
            <person name="Shibahara T."/>
            <person name="Tanaka T."/>
            <person name="Ishii S."/>
            <person name="Yamamoto J."/>
            <person name="Saito K."/>
            <person name="Kawai Y."/>
            <person name="Isono Y."/>
            <person name="Nakamura Y."/>
            <person name="Nagahari K."/>
            <person name="Murakami K."/>
            <person name="Yasuda T."/>
            <person name="Iwayanagi T."/>
            <person name="Wagatsuma M."/>
            <person name="Shiratori A."/>
            <person name="Sudo H."/>
            <person name="Hosoiri T."/>
            <person name="Kaku Y."/>
            <person name="Kodaira H."/>
            <person name="Kondo H."/>
            <person name="Sugawara M."/>
            <person name="Takahashi M."/>
            <person name="Kanda K."/>
            <person name="Yokoi T."/>
            <person name="Furuya T."/>
            <person name="Kikkawa E."/>
            <person name="Omura Y."/>
            <person name="Abe K."/>
            <person name="Kamihara K."/>
            <person name="Katsuta N."/>
            <person name="Sato K."/>
            <person name="Tanikawa M."/>
            <person name="Yamazaki M."/>
            <person name="Ninomiya K."/>
            <person name="Ishibashi T."/>
            <person name="Yamashita H."/>
            <person name="Murakawa K."/>
            <person name="Fujimori K."/>
            <person name="Tanai H."/>
            <person name="Kimata M."/>
            <person name="Watanabe M."/>
            <person name="Hiraoka S."/>
            <person name="Chiba Y."/>
            <person name="Ishida S."/>
            <person name="Ono Y."/>
            <person name="Takiguchi S."/>
            <person name="Watanabe S."/>
            <person name="Yosida M."/>
            <person name="Hotuta T."/>
            <person name="Kusano J."/>
            <person name="Kanehori K."/>
            <person name="Takahashi-Fujii A."/>
            <person name="Hara H."/>
            <person name="Tanase T.-O."/>
            <person name="Nomura Y."/>
            <person name="Togiya S."/>
            <person name="Komai F."/>
            <person name="Hara R."/>
            <person name="Takeuchi K."/>
            <person name="Arita M."/>
            <person name="Imose N."/>
            <person name="Musashino K."/>
            <person name="Yuuki H."/>
            <person name="Oshima A."/>
            <person name="Sasaki N."/>
            <person name="Aotsuka S."/>
            <person name="Yoshikawa Y."/>
            <person name="Matsunawa H."/>
            <person name="Ichihara T."/>
            <person name="Shiohata N."/>
            <person name="Sano S."/>
            <person name="Moriya S."/>
            <person name="Momiyama H."/>
            <person name="Satoh N."/>
            <person name="Takami S."/>
            <person name="Terashima Y."/>
            <person name="Suzuki O."/>
            <person name="Nakagawa S."/>
            <person name="Senoh A."/>
            <person name="Mizoguchi H."/>
            <person name="Goto Y."/>
            <person name="Shimizu F."/>
            <person name="Wakebe H."/>
            <person name="Hishigaki H."/>
            <person name="Watanabe T."/>
            <person name="Sugiyama A."/>
            <person name="Takemoto M."/>
            <person name="Kawakami B."/>
            <person name="Yamazaki M."/>
            <person name="Watanabe K."/>
            <person name="Kumagai A."/>
            <person name="Itakura S."/>
            <person name="Fukuzumi Y."/>
            <person name="Fujimori Y."/>
            <person name="Komiyama M."/>
            <person name="Tashiro H."/>
            <person name="Tanigami A."/>
            <person name="Fujiwara T."/>
            <person name="Ono T."/>
            <person name="Yamada K."/>
            <person name="Fujii Y."/>
            <person name="Ozaki K."/>
            <person name="Hirao M."/>
            <person name="Ohmori Y."/>
            <person name="Kawabata A."/>
            <person name="Hikiji T."/>
            <person name="Kobatake N."/>
            <person name="Inagaki H."/>
            <person name="Ikema Y."/>
            <person name="Okamoto S."/>
            <person name="Okitani R."/>
            <person name="Kawakami T."/>
            <person name="Noguchi S."/>
            <person name="Itoh T."/>
            <person name="Shigeta K."/>
            <person name="Senba T."/>
            <person name="Matsumura K."/>
            <person name="Nakajima Y."/>
            <person name="Mizuno T."/>
            <person name="Morinaga M."/>
            <person name="Sasaki M."/>
            <person name="Togashi T."/>
            <person name="Oyama M."/>
            <person name="Hata H."/>
            <person name="Watanabe M."/>
            <person name="Komatsu T."/>
            <person name="Mizushima-Sugano J."/>
            <person name="Satoh T."/>
            <person name="Shirai Y."/>
            <person name="Takahashi Y."/>
            <person name="Nakagawa K."/>
            <person name="Okumura K."/>
            <person name="Nagase T."/>
            <person name="Nomura N."/>
            <person name="Kikuchi H."/>
            <person name="Masuho Y."/>
            <person name="Yamashita R."/>
            <person name="Nakai K."/>
            <person name="Yada T."/>
            <person name="Nakamura Y."/>
            <person name="Ohara O."/>
            <person name="Isogai T."/>
            <person name="Sugano S."/>
        </authorList>
    </citation>
    <scope>NUCLEOTIDE SEQUENCE [LARGE SCALE MRNA]</scope>
    <source>
        <tissue>Thalamus</tissue>
    </source>
</reference>
<reference key="2">
    <citation type="journal article" date="1999" name="Nature">
        <title>The DNA sequence of human chromosome 22.</title>
        <authorList>
            <person name="Dunham I."/>
            <person name="Hunt A.R."/>
            <person name="Collins J.E."/>
            <person name="Bruskiewich R."/>
            <person name="Beare D.M."/>
            <person name="Clamp M."/>
            <person name="Smink L.J."/>
            <person name="Ainscough R."/>
            <person name="Almeida J.P."/>
            <person name="Babbage A.K."/>
            <person name="Bagguley C."/>
            <person name="Bailey J."/>
            <person name="Barlow K.F."/>
            <person name="Bates K.N."/>
            <person name="Beasley O.P."/>
            <person name="Bird C.P."/>
            <person name="Blakey S.E."/>
            <person name="Bridgeman A.M."/>
            <person name="Buck D."/>
            <person name="Burgess J."/>
            <person name="Burrill W.D."/>
            <person name="Burton J."/>
            <person name="Carder C."/>
            <person name="Carter N.P."/>
            <person name="Chen Y."/>
            <person name="Clark G."/>
            <person name="Clegg S.M."/>
            <person name="Cobley V.E."/>
            <person name="Cole C.G."/>
            <person name="Collier R.E."/>
            <person name="Connor R."/>
            <person name="Conroy D."/>
            <person name="Corby N.R."/>
            <person name="Coville G.J."/>
            <person name="Cox A.V."/>
            <person name="Davis J."/>
            <person name="Dawson E."/>
            <person name="Dhami P.D."/>
            <person name="Dockree C."/>
            <person name="Dodsworth S.J."/>
            <person name="Durbin R.M."/>
            <person name="Ellington A.G."/>
            <person name="Evans K.L."/>
            <person name="Fey J.M."/>
            <person name="Fleming K."/>
            <person name="French L."/>
            <person name="Garner A.A."/>
            <person name="Gilbert J.G.R."/>
            <person name="Goward M.E."/>
            <person name="Grafham D.V."/>
            <person name="Griffiths M.N.D."/>
            <person name="Hall C."/>
            <person name="Hall R.E."/>
            <person name="Hall-Tamlyn G."/>
            <person name="Heathcott R.W."/>
            <person name="Ho S."/>
            <person name="Holmes S."/>
            <person name="Hunt S.E."/>
            <person name="Jones M.C."/>
            <person name="Kershaw J."/>
            <person name="Kimberley A.M."/>
            <person name="King A."/>
            <person name="Laird G.K."/>
            <person name="Langford C.F."/>
            <person name="Leversha M.A."/>
            <person name="Lloyd C."/>
            <person name="Lloyd D.M."/>
            <person name="Martyn I.D."/>
            <person name="Mashreghi-Mohammadi M."/>
            <person name="Matthews L.H."/>
            <person name="Mccann O.T."/>
            <person name="Mcclay J."/>
            <person name="Mclaren S."/>
            <person name="McMurray A.A."/>
            <person name="Milne S.A."/>
            <person name="Mortimore B.J."/>
            <person name="Odell C.N."/>
            <person name="Pavitt R."/>
            <person name="Pearce A.V."/>
            <person name="Pearson D."/>
            <person name="Phillimore B.J.C.T."/>
            <person name="Phillips S.H."/>
            <person name="Plumb R.W."/>
            <person name="Ramsay H."/>
            <person name="Ramsey Y."/>
            <person name="Rogers L."/>
            <person name="Ross M.T."/>
            <person name="Scott C.E."/>
            <person name="Sehra H.K."/>
            <person name="Skuce C.D."/>
            <person name="Smalley S."/>
            <person name="Smith M.L."/>
            <person name="Soderlund C."/>
            <person name="Spragon L."/>
            <person name="Steward C.A."/>
            <person name="Sulston J.E."/>
            <person name="Swann R.M."/>
            <person name="Vaudin M."/>
            <person name="Wall M."/>
            <person name="Wallis J.M."/>
            <person name="Whiteley M.N."/>
            <person name="Willey D.L."/>
            <person name="Williams L."/>
            <person name="Williams S.A."/>
            <person name="Williamson H."/>
            <person name="Wilmer T.E."/>
            <person name="Wilming L."/>
            <person name="Wright C.L."/>
            <person name="Hubbard T."/>
            <person name="Bentley D.R."/>
            <person name="Beck S."/>
            <person name="Rogers J."/>
            <person name="Shimizu N."/>
            <person name="Minoshima S."/>
            <person name="Kawasaki K."/>
            <person name="Sasaki T."/>
            <person name="Asakawa S."/>
            <person name="Kudoh J."/>
            <person name="Shintani A."/>
            <person name="Shibuya K."/>
            <person name="Yoshizaki Y."/>
            <person name="Aoki N."/>
            <person name="Mitsuyama S."/>
            <person name="Roe B.A."/>
            <person name="Chen F."/>
            <person name="Chu L."/>
            <person name="Crabtree J."/>
            <person name="Deschamps S."/>
            <person name="Do A."/>
            <person name="Do T."/>
            <person name="Dorman A."/>
            <person name="Fang F."/>
            <person name="Fu Y."/>
            <person name="Hu P."/>
            <person name="Hua A."/>
            <person name="Kenton S."/>
            <person name="Lai H."/>
            <person name="Lao H.I."/>
            <person name="Lewis J."/>
            <person name="Lewis S."/>
            <person name="Lin S.-P."/>
            <person name="Loh P."/>
            <person name="Malaj E."/>
            <person name="Nguyen T."/>
            <person name="Pan H."/>
            <person name="Phan S."/>
            <person name="Qi S."/>
            <person name="Qian Y."/>
            <person name="Ray L."/>
            <person name="Ren Q."/>
            <person name="Shaull S."/>
            <person name="Sloan D."/>
            <person name="Song L."/>
            <person name="Wang Q."/>
            <person name="Wang Y."/>
            <person name="Wang Z."/>
            <person name="White J."/>
            <person name="Willingham D."/>
            <person name="Wu H."/>
            <person name="Yao Z."/>
            <person name="Zhan M."/>
            <person name="Zhang G."/>
            <person name="Chissoe S."/>
            <person name="Murray J."/>
            <person name="Miller N."/>
            <person name="Minx P."/>
            <person name="Fulton R."/>
            <person name="Johnson D."/>
            <person name="Bemis G."/>
            <person name="Bentley D."/>
            <person name="Bradshaw H."/>
            <person name="Bourne S."/>
            <person name="Cordes M."/>
            <person name="Du Z."/>
            <person name="Fulton L."/>
            <person name="Goela D."/>
            <person name="Graves T."/>
            <person name="Hawkins J."/>
            <person name="Hinds K."/>
            <person name="Kemp K."/>
            <person name="Latreille P."/>
            <person name="Layman D."/>
            <person name="Ozersky P."/>
            <person name="Rohlfing T."/>
            <person name="Scheet P."/>
            <person name="Walker C."/>
            <person name="Wamsley A."/>
            <person name="Wohldmann P."/>
            <person name="Pepin K."/>
            <person name="Nelson J."/>
            <person name="Korf I."/>
            <person name="Bedell J.A."/>
            <person name="Hillier L.W."/>
            <person name="Mardis E."/>
            <person name="Waterston R."/>
            <person name="Wilson R."/>
            <person name="Emanuel B.S."/>
            <person name="Shaikh T."/>
            <person name="Kurahashi H."/>
            <person name="Saitta S."/>
            <person name="Budarf M.L."/>
            <person name="McDermid H.E."/>
            <person name="Johnson A."/>
            <person name="Wong A.C.C."/>
            <person name="Morrow B.E."/>
            <person name="Edelmann L."/>
            <person name="Kim U.J."/>
            <person name="Shizuya H."/>
            <person name="Simon M.I."/>
            <person name="Dumanski J.P."/>
            <person name="Peyrard M."/>
            <person name="Kedra D."/>
            <person name="Seroussi E."/>
            <person name="Fransson I."/>
            <person name="Tapia I."/>
            <person name="Bruder C.E."/>
            <person name="O'Brien K.P."/>
            <person name="Wilkinson P."/>
            <person name="Bodenteich A."/>
            <person name="Hartman K."/>
            <person name="Hu X."/>
            <person name="Khan A.S."/>
            <person name="Lane L."/>
            <person name="Tilahun Y."/>
            <person name="Wright H."/>
        </authorList>
    </citation>
    <scope>NUCLEOTIDE SEQUENCE [LARGE SCALE GENOMIC DNA]</scope>
</reference>